<keyword id="KW-1003">Cell membrane</keyword>
<keyword id="KW-1015">Disulfide bond</keyword>
<keyword id="KW-0325">Glycoprotein</keyword>
<keyword id="KW-0472">Membrane</keyword>
<keyword id="KW-0597">Phosphoprotein</keyword>
<keyword id="KW-0675">Receptor</keyword>
<keyword id="KW-1185">Reference proteome</keyword>
<keyword id="KW-0677">Repeat</keyword>
<keyword id="KW-0732">Signal</keyword>
<keyword id="KW-0812">Transmembrane</keyword>
<keyword id="KW-1133">Transmembrane helix</keyword>
<dbReference type="EMBL" id="U25416">
    <property type="protein sequence ID" value="AAA92887.1"/>
    <property type="molecule type" value="mRNA"/>
</dbReference>
<dbReference type="EMBL" id="BC130026">
    <property type="protein sequence ID" value="AAI30027.1"/>
    <property type="molecule type" value="mRNA"/>
</dbReference>
<dbReference type="CCDS" id="CCDS18915.1"/>
<dbReference type="RefSeq" id="NP_033427.1">
    <property type="nucleotide sequence ID" value="NM_009401.3"/>
</dbReference>
<dbReference type="BioGRID" id="204253">
    <property type="interactions" value="1"/>
</dbReference>
<dbReference type="FunCoup" id="Q60846">
    <property type="interactions" value="891"/>
</dbReference>
<dbReference type="STRING" id="10090.ENSMUSP00000030339"/>
<dbReference type="GlyCosmos" id="Q60846">
    <property type="glycosylation" value="3 sites, No reported glycans"/>
</dbReference>
<dbReference type="GlyGen" id="Q60846">
    <property type="glycosylation" value="3 sites, 1 N-linked glycan (1 site)"/>
</dbReference>
<dbReference type="iPTMnet" id="Q60846"/>
<dbReference type="PhosphoSitePlus" id="Q60846"/>
<dbReference type="PaxDb" id="10090-ENSMUSP00000030339"/>
<dbReference type="ProteomicsDB" id="259484"/>
<dbReference type="Antibodypedia" id="3659">
    <property type="antibodies" value="2486 antibodies from 46 providers"/>
</dbReference>
<dbReference type="DNASU" id="21941"/>
<dbReference type="Ensembl" id="ENSMUST00000030339.13">
    <property type="protein sequence ID" value="ENSMUSP00000030339.7"/>
    <property type="gene ID" value="ENSMUSG00000028602.13"/>
</dbReference>
<dbReference type="GeneID" id="21941"/>
<dbReference type="KEGG" id="mmu:21941"/>
<dbReference type="UCSC" id="uc008vrv.1">
    <property type="organism name" value="mouse"/>
</dbReference>
<dbReference type="AGR" id="MGI:99908"/>
<dbReference type="CTD" id="943"/>
<dbReference type="MGI" id="MGI:99908">
    <property type="gene designation" value="Tnfrsf8"/>
</dbReference>
<dbReference type="VEuPathDB" id="HostDB:ENSMUSG00000028602"/>
<dbReference type="eggNOG" id="ENOG502SNQ9">
    <property type="taxonomic scope" value="Eukaryota"/>
</dbReference>
<dbReference type="GeneTree" id="ENSGT00510000049215"/>
<dbReference type="HOGENOM" id="CLU_043282_0_0_1"/>
<dbReference type="InParanoid" id="Q60846"/>
<dbReference type="OMA" id="CKACVTC"/>
<dbReference type="OrthoDB" id="8633482at2759"/>
<dbReference type="PhylomeDB" id="Q60846"/>
<dbReference type="TreeFam" id="TF331157"/>
<dbReference type="Reactome" id="R-MMU-5669034">
    <property type="pathway name" value="TNFs bind their physiological receptors"/>
</dbReference>
<dbReference type="BioGRID-ORCS" id="21941">
    <property type="hits" value="0 hits in 78 CRISPR screens"/>
</dbReference>
<dbReference type="PRO" id="PR:Q60846"/>
<dbReference type="Proteomes" id="UP000000589">
    <property type="component" value="Chromosome 4"/>
</dbReference>
<dbReference type="RNAct" id="Q60846">
    <property type="molecule type" value="protein"/>
</dbReference>
<dbReference type="Bgee" id="ENSMUSG00000028602">
    <property type="expression patterns" value="Expressed in retinal neural layer and 23 other cell types or tissues"/>
</dbReference>
<dbReference type="ExpressionAtlas" id="Q60846">
    <property type="expression patterns" value="baseline and differential"/>
</dbReference>
<dbReference type="GO" id="GO:0005886">
    <property type="term" value="C:plasma membrane"/>
    <property type="evidence" value="ECO:0007669"/>
    <property type="project" value="UniProtKB-SubCell"/>
</dbReference>
<dbReference type="GO" id="GO:0004888">
    <property type="term" value="F:transmembrane signaling receptor activity"/>
    <property type="evidence" value="ECO:0007669"/>
    <property type="project" value="InterPro"/>
</dbReference>
<dbReference type="GO" id="GO:0007165">
    <property type="term" value="P:signal transduction"/>
    <property type="evidence" value="ECO:0007669"/>
    <property type="project" value="InterPro"/>
</dbReference>
<dbReference type="CDD" id="cd13409">
    <property type="entry name" value="TNFRSF8"/>
    <property type="match status" value="1"/>
</dbReference>
<dbReference type="Gene3D" id="2.10.50.10">
    <property type="entry name" value="Tumor Necrosis Factor Receptor, subunit A, domain 2"/>
    <property type="match status" value="1"/>
</dbReference>
<dbReference type="InterPro" id="IPR001368">
    <property type="entry name" value="TNFR/NGFR_Cys_rich_reg"/>
</dbReference>
<dbReference type="InterPro" id="IPR020416">
    <property type="entry name" value="TNFR_8"/>
</dbReference>
<dbReference type="InterPro" id="IPR052862">
    <property type="entry name" value="TNFR_superfamily_member_8"/>
</dbReference>
<dbReference type="InterPro" id="IPR034002">
    <property type="entry name" value="TNFRSF8_N"/>
</dbReference>
<dbReference type="PANTHER" id="PTHR47497">
    <property type="entry name" value="TUMOR NECROSIS FACTOR RECEPTOR SUPERFAMILY MEMBER 8"/>
    <property type="match status" value="1"/>
</dbReference>
<dbReference type="PANTHER" id="PTHR47497:SF1">
    <property type="entry name" value="TUMOR NECROSIS FACTOR RECEPTOR SUPERFAMILY MEMBER 8"/>
    <property type="match status" value="1"/>
</dbReference>
<dbReference type="Pfam" id="PF00020">
    <property type="entry name" value="TNFR_c6"/>
    <property type="match status" value="1"/>
</dbReference>
<dbReference type="PRINTS" id="PR01923">
    <property type="entry name" value="TNFACTORR8"/>
</dbReference>
<dbReference type="SMART" id="SM00208">
    <property type="entry name" value="TNFR"/>
    <property type="match status" value="3"/>
</dbReference>
<dbReference type="PROSITE" id="PS00652">
    <property type="entry name" value="TNFR_NGFR_1"/>
    <property type="match status" value="1"/>
</dbReference>
<dbReference type="PROSITE" id="PS50050">
    <property type="entry name" value="TNFR_NGFR_2"/>
    <property type="match status" value="2"/>
</dbReference>
<gene>
    <name evidence="8" type="primary">Tnfrsf8</name>
</gene>
<organism>
    <name type="scientific">Mus musculus</name>
    <name type="common">Mouse</name>
    <dbReference type="NCBI Taxonomy" id="10090"/>
    <lineage>
        <taxon>Eukaryota</taxon>
        <taxon>Metazoa</taxon>
        <taxon>Chordata</taxon>
        <taxon>Craniata</taxon>
        <taxon>Vertebrata</taxon>
        <taxon>Euteleostomi</taxon>
        <taxon>Mammalia</taxon>
        <taxon>Eutheria</taxon>
        <taxon>Euarchontoglires</taxon>
        <taxon>Glires</taxon>
        <taxon>Rodentia</taxon>
        <taxon>Myomorpha</taxon>
        <taxon>Muroidea</taxon>
        <taxon>Muridae</taxon>
        <taxon>Murinae</taxon>
        <taxon>Mus</taxon>
        <taxon>Mus</taxon>
    </lineage>
</organism>
<evidence type="ECO:0000250" key="1"/>
<evidence type="ECO:0000250" key="2">
    <source>
        <dbReference type="UniProtKB" id="P28908"/>
    </source>
</evidence>
<evidence type="ECO:0000255" key="3"/>
<evidence type="ECO:0000255" key="4">
    <source>
        <dbReference type="PROSITE-ProRule" id="PRU00206"/>
    </source>
</evidence>
<evidence type="ECO:0000256" key="5">
    <source>
        <dbReference type="SAM" id="MobiDB-lite"/>
    </source>
</evidence>
<evidence type="ECO:0000269" key="6">
    <source>
    </source>
</evidence>
<evidence type="ECO:0000305" key="7"/>
<evidence type="ECO:0000312" key="8">
    <source>
        <dbReference type="MGI" id="MGI:99908"/>
    </source>
</evidence>
<comment type="function">
    <text evidence="2 6">Receptor for TNFSF8/CD30L (PubMed:8543792). May play a role in the regulation of cellular growth and transformation of activated lymphoblasts. Regulates gene expression through activation of NF-kappa-B (By similarity).</text>
</comment>
<comment type="subunit">
    <text evidence="1">Interacts with TRAF1, TRAF2, TRAF3 and TRAF5.</text>
</comment>
<comment type="subcellular location">
    <subcellularLocation>
        <location evidence="6">Cell membrane</location>
        <topology evidence="3">Single-pass type I membrane protein</topology>
    </subcellularLocation>
</comment>
<comment type="tissue specificity">
    <text evidence="6">Detected in thymus and in activated splenocytes.</text>
</comment>
<comment type="induction">
    <text evidence="6">By concanavalin A and pokeweed mitogen in splenocytes.</text>
</comment>
<comment type="similarity">
    <text evidence="7">Belongs to the TNFR8 family.</text>
</comment>
<reference key="1">
    <citation type="journal article" date="1996" name="J. Immunol.">
        <title>Structure and expression of murine CD30 and its role in cytokine production.</title>
        <authorList>
            <person name="Bowen M.A."/>
            <person name="Lee R.K."/>
            <person name="Miragliotta G."/>
            <person name="Nam S.Y."/>
            <person name="Podack E.R."/>
        </authorList>
    </citation>
    <scope>NUCLEOTIDE SEQUENCE [MRNA]</scope>
    <scope>FUNCTION</scope>
    <scope>SUBCELLULAR LOCATION</scope>
    <scope>TISSUE SPECIFICITY</scope>
    <scope>INDUCTION</scope>
    <source>
        <strain>BALB/cJ</strain>
        <tissue>Splenocyte</tissue>
    </source>
</reference>
<reference key="2">
    <citation type="journal article" date="2004" name="Genome Res.">
        <title>The status, quality, and expansion of the NIH full-length cDNA project: the Mammalian Gene Collection (MGC).</title>
        <authorList>
            <consortium name="The MGC Project Team"/>
        </authorList>
    </citation>
    <scope>NUCLEOTIDE SEQUENCE [LARGE SCALE MRNA]</scope>
</reference>
<feature type="signal peptide" evidence="3">
    <location>
        <begin position="1"/>
        <end position="18"/>
    </location>
</feature>
<feature type="chain" id="PRO_0000034575" description="Tumor necrosis factor receptor superfamily member 8">
    <location>
        <begin position="19"/>
        <end position="498"/>
    </location>
</feature>
<feature type="topological domain" description="Extracellular" evidence="7">
    <location>
        <begin position="19"/>
        <end position="287"/>
    </location>
</feature>
<feature type="transmembrane region" description="Helical" evidence="3">
    <location>
        <begin position="288"/>
        <end position="308"/>
    </location>
</feature>
<feature type="topological domain" description="Cytoplasmic" evidence="7">
    <location>
        <begin position="309"/>
        <end position="498"/>
    </location>
</feature>
<feature type="repeat" description="TNFR-Cys 1" evidence="4">
    <location>
        <begin position="68"/>
        <end position="105"/>
    </location>
</feature>
<feature type="repeat" description="TNFR-Cys 2" evidence="4">
    <location>
        <begin position="106"/>
        <end position="146"/>
    </location>
</feature>
<feature type="region of interest" description="Disordered" evidence="5">
    <location>
        <begin position="142"/>
        <end position="168"/>
    </location>
</feature>
<feature type="region of interest" description="Disordered" evidence="5">
    <location>
        <begin position="204"/>
        <end position="256"/>
    </location>
</feature>
<feature type="region of interest" description="Disordered" evidence="5">
    <location>
        <begin position="338"/>
        <end position="370"/>
    </location>
</feature>
<feature type="region of interest" description="Disordered" evidence="5">
    <location>
        <begin position="389"/>
        <end position="411"/>
    </location>
</feature>
<feature type="region of interest" description="Disordered" evidence="5">
    <location>
        <begin position="436"/>
        <end position="498"/>
    </location>
</feature>
<feature type="compositionally biased region" description="Low complexity" evidence="5">
    <location>
        <begin position="149"/>
        <end position="160"/>
    </location>
</feature>
<feature type="compositionally biased region" description="Polar residues" evidence="5">
    <location>
        <begin position="242"/>
        <end position="256"/>
    </location>
</feature>
<feature type="compositionally biased region" description="Polar residues" evidence="5">
    <location>
        <begin position="338"/>
        <end position="358"/>
    </location>
</feature>
<feature type="compositionally biased region" description="Basic and acidic residues" evidence="5">
    <location>
        <begin position="402"/>
        <end position="411"/>
    </location>
</feature>
<feature type="compositionally biased region" description="Basic and acidic residues" evidence="5">
    <location>
        <begin position="456"/>
        <end position="465"/>
    </location>
</feature>
<feature type="compositionally biased region" description="Basic and acidic residues" evidence="5">
    <location>
        <begin position="484"/>
        <end position="498"/>
    </location>
</feature>
<feature type="modified residue" description="Phosphoserine" evidence="2">
    <location>
        <position position="339"/>
    </location>
</feature>
<feature type="modified residue" description="Phosphoserine" evidence="2">
    <location>
        <position position="353"/>
    </location>
</feature>
<feature type="glycosylation site" description="N-linked (GlcNAc...) asparagine" evidence="3">
    <location>
        <position position="156"/>
    </location>
</feature>
<feature type="glycosylation site" description="N-linked (GlcNAc...) asparagine" evidence="3">
    <location>
        <position position="183"/>
    </location>
</feature>
<feature type="glycosylation site" description="N-linked (GlcNAc...) asparagine" evidence="3">
    <location>
        <position position="229"/>
    </location>
</feature>
<feature type="disulfide bond" evidence="4">
    <location>
        <begin position="69"/>
        <end position="81"/>
    </location>
</feature>
<feature type="disulfide bond" evidence="4">
    <location>
        <begin position="84"/>
        <end position="97"/>
    </location>
</feature>
<feature type="disulfide bond" evidence="4">
    <location>
        <begin position="87"/>
        <end position="105"/>
    </location>
</feature>
<feature type="disulfide bond" evidence="4">
    <location>
        <begin position="107"/>
        <end position="121"/>
    </location>
</feature>
<feature type="disulfide bond" evidence="4">
    <location>
        <begin position="128"/>
        <end position="146"/>
    </location>
</feature>
<name>TNR8_MOUSE</name>
<protein>
    <recommendedName>
        <fullName evidence="2">Tumor necrosis factor receptor superfamily member 8</fullName>
    </recommendedName>
    <alternativeName>
        <fullName>CD30L receptor</fullName>
    </alternativeName>
    <alternativeName>
        <fullName>Lymphocyte activation antigen CD30</fullName>
    </alternativeName>
    <cdAntigenName evidence="2">CD30</cdAntigenName>
</protein>
<sequence>MSALLTAAGLLFLGMLQAFPTDRPLKTTCAGDLSHYPGEAARNCCYQCPSGLSPTQPCPRGPAHCRKQCAPDYYVNEDGKCTACVTCLPGLVEKAPCSGNSPRICECQPGMHCCTPAVNSCARCKLHCSGEEVVKSPGTAKKDTICELPSSGSGPNCSNPGDRKTLTSHATPQAMPTLESPANDSARSLLPMRVTNLVQEDATELVKVPESSSSKAREPSPDPGNAEKNMTLELPSPGTLPDISTSENSKEPASTASTLSLVVDAWTSSRMQPTSPLSTGTPFLDPGPVLFWVAMVVLLVGSGSFLLCYWKACRRRFQQKFHLDYLVQTFQPKMEQTDSCPTEKLTQPQRSGSVTDPSTGHKLSPVSPPPAVETCASVGATYLENLPLLDDSPAGNPFSPREPPEPRVSTEHTNNRIEKIYIMKADTVIVGSVKTEVPEGRAPAGSTESELEAELEVDHAPHYPEQETEPPLGSCTEVMFSVEEGGKEDHGPTTVSEK</sequence>
<accession>Q60846</accession>
<accession>A1L3C9</accession>
<proteinExistence type="evidence at transcript level"/>